<accession>Q6JN46</accession>
<accession>K4CBY2</accession>
<evidence type="ECO:0000255" key="1"/>
<evidence type="ECO:0000255" key="2">
    <source>
        <dbReference type="PROSITE-ProRule" id="PRU00498"/>
    </source>
</evidence>
<evidence type="ECO:0000269" key="3">
    <source>
    </source>
</evidence>
<evidence type="ECO:0000305" key="4"/>
<evidence type="ECO:0000305" key="5">
    <source>
    </source>
</evidence>
<evidence type="ECO:0000312" key="6">
    <source>
        <dbReference type="EMBL" id="AAR28378.1"/>
    </source>
</evidence>
<sequence length="1021" mass="114821">MGKRTNPRHFLVTWSLLLLETAFGLTSREVNKTLCIEKERDALLEFKRGLNDDFGRLSTWGDEEECCNWKGIECDKRTGHVIVLDLHSEVTCPGHACFAPILTGKVSPSLLELEYLNFLDLSVNGFENSEIPRFIGSLKRLEYLNLSSSDFSGEIPAQFQNLTSLRILDLGNNNLIVKDLVWLSHLSSLEFLRLGGNDFQARNWFREITKVPSLKELDLSVCGLSKFVPSPADVANSSLISLSVLHLCCNEFSTSSEYSWLFNFSTSLTSIDLSHNQLSRQIDDRFGSLMYLEHLNLANNFGAEGGVPSSFGNLTRLHYLDMSNTQTYQWLPELFLRLSGSRKSLEVLGLNDNSLFGSIVNVTRFSSLKKLYLQKNMLNGFFMERVGQVSSLEYLDLSDNQMRGPLPDLALFPSLRELHLGSNQFQGRIPQGIGKLSQLRIFDVSSNRLEGLPESMGQLSNLERFDASYNVLKGTITESHFSNLSSLVDLDLSFNLLSLNTRFDWVPPFQLQFIRLPSCNMGPSFPKWLQTQNNYTLLDISLANISDMLPSWFSNLPPELKILNLSNNHISGRVSEFIVSKQDYMIIDLSSNNFSGHLPLVPANIQIFYLHKNHFSGSISSICRNTIGAATSIDLSRNQFSGEVPDCWMNMSNLAVLNLAYNNFSGKVPQSLGSLTNLEALYIRQNSFRGMLPSFSQCQLLQILDIGGNKLTGRIPAWIGTDLLQLRILSLRSNKFDGSIPSLICQLQFLQILDLSENGLSGKIPQCLNNFTILRQENGSGESMDFKVRYDYIPGSYLYIGDLLIQWKNQESEYKNALLYLKIIDLSSNKLVGGIPKEIAEMRGLRSLNLSRNDLNGTVVEGIGQMKLLESLDLSRNQLSGMIPQGLSNLTFLSVLDLSNNHLSGRIPSSTQLQSFDRSSYSGNAQLCGPPLEECPGYAPPIDRGSNTNPQEHDDDDEFSSLEFYVSMVLGFFVTFWGILGCLIVNRSWRNAYFTFLTDMKSWLHMTSRVCFARLKGKLRN</sequence>
<keyword id="KW-1003">Cell membrane</keyword>
<keyword id="KW-0325">Glycoprotein</keyword>
<keyword id="KW-0433">Leucine-rich repeat</keyword>
<keyword id="KW-0472">Membrane</keyword>
<keyword id="KW-0611">Plant defense</keyword>
<keyword id="KW-0675">Receptor</keyword>
<keyword id="KW-1185">Reference proteome</keyword>
<keyword id="KW-0677">Repeat</keyword>
<keyword id="KW-0732">Signal</keyword>
<keyword id="KW-0812">Transmembrane</keyword>
<keyword id="KW-1133">Transmembrane helix</keyword>
<comment type="function">
    <text evidence="3">Involved in plant defense. Confers resistance to the fungal pathogen T.viride through recognition of the EIX elicitor protein.</text>
</comment>
<comment type="subunit">
    <text evidence="3">Interacts with EIX elicitor protein.</text>
</comment>
<comment type="subcellular location">
    <subcellularLocation>
        <location evidence="4">Cell membrane</location>
        <topology evidence="4">Single-pass type I membrane protein</topology>
    </subcellularLocation>
</comment>
<comment type="similarity">
    <text evidence="4">Belongs to the RLP family.</text>
</comment>
<feature type="signal peptide" evidence="1">
    <location>
        <begin position="1"/>
        <end position="24"/>
    </location>
</feature>
<feature type="chain" id="PRO_5004275128" description="Receptor-like protein EIX2">
    <location>
        <begin position="25"/>
        <end position="1021"/>
    </location>
</feature>
<feature type="topological domain" description="Extracellular" evidence="1">
    <location>
        <begin position="25"/>
        <end position="963"/>
    </location>
</feature>
<feature type="transmembrane region" description="Helical" evidence="1">
    <location>
        <begin position="964"/>
        <end position="984"/>
    </location>
</feature>
<feature type="topological domain" description="Cytoplasmic" evidence="1">
    <location>
        <begin position="985"/>
        <end position="1021"/>
    </location>
</feature>
<feature type="repeat" description="LRR 1" evidence="1">
    <location>
        <begin position="113"/>
        <end position="136"/>
    </location>
</feature>
<feature type="repeat" description="LRR 2" evidence="1">
    <location>
        <begin position="138"/>
        <end position="161"/>
    </location>
</feature>
<feature type="repeat" description="LRR 3" evidence="1">
    <location>
        <begin position="162"/>
        <end position="184"/>
    </location>
</feature>
<feature type="repeat" description="LRR 4" evidence="1">
    <location>
        <begin position="186"/>
        <end position="211"/>
    </location>
</feature>
<feature type="repeat" description="LRR 5" evidence="1">
    <location>
        <begin position="214"/>
        <end position="237"/>
    </location>
</feature>
<feature type="repeat" description="LRR 6" evidence="1">
    <location>
        <begin position="239"/>
        <end position="262"/>
    </location>
</feature>
<feature type="repeat" description="LRR 7" evidence="1">
    <location>
        <begin position="265"/>
        <end position="288"/>
    </location>
</feature>
<feature type="repeat" description="LRR 8" evidence="1">
    <location>
        <begin position="290"/>
        <end position="313"/>
    </location>
</feature>
<feature type="repeat" description="LRR 9" evidence="1">
    <location>
        <begin position="314"/>
        <end position="337"/>
    </location>
</feature>
<feature type="repeat" description="LRR 10" evidence="1">
    <location>
        <begin position="342"/>
        <end position="365"/>
    </location>
</feature>
<feature type="repeat" description="LRR 11" evidence="1">
    <location>
        <begin position="366"/>
        <end position="388"/>
    </location>
</feature>
<feature type="repeat" description="LRR 12" evidence="1">
    <location>
        <begin position="389"/>
        <end position="412"/>
    </location>
</feature>
<feature type="repeat" description="LRR 13" evidence="1">
    <location>
        <begin position="413"/>
        <end position="436"/>
    </location>
</feature>
<feature type="repeat" description="LRR 14" evidence="1">
    <location>
        <begin position="437"/>
        <end position="459"/>
    </location>
</feature>
<feature type="repeat" description="LRR 15" evidence="1">
    <location>
        <begin position="461"/>
        <end position="483"/>
    </location>
</feature>
<feature type="repeat" description="LRR 16" evidence="1">
    <location>
        <begin position="484"/>
        <end position="507"/>
    </location>
</feature>
<feature type="repeat" description="LRR 17" evidence="1">
    <location>
        <begin position="509"/>
        <end position="532"/>
    </location>
</feature>
<feature type="repeat" description="LRR 18" evidence="1">
    <location>
        <begin position="533"/>
        <end position="555"/>
    </location>
</feature>
<feature type="repeat" description="LRR 19" evidence="1">
    <location>
        <begin position="557"/>
        <end position="581"/>
    </location>
</feature>
<feature type="repeat" description="LRR 20" evidence="1">
    <location>
        <begin position="583"/>
        <end position="607"/>
    </location>
</feature>
<feature type="repeat" description="LRR 21; degenerate" evidence="4">
    <location>
        <begin position="608"/>
        <end position="626"/>
    </location>
</feature>
<feature type="repeat" description="LRR 22" evidence="1">
    <location>
        <begin position="627"/>
        <end position="651"/>
    </location>
</feature>
<feature type="repeat" description="LRR 23" evidence="1">
    <location>
        <begin position="652"/>
        <end position="675"/>
    </location>
</feature>
<feature type="repeat" description="LRR 24" evidence="1">
    <location>
        <begin position="677"/>
        <end position="698"/>
    </location>
</feature>
<feature type="repeat" description="LRR 25" evidence="1">
    <location>
        <begin position="699"/>
        <end position="722"/>
    </location>
</feature>
<feature type="repeat" description="LRR 26" evidence="1">
    <location>
        <begin position="723"/>
        <end position="747"/>
    </location>
</feature>
<feature type="repeat" description="LRR 27" evidence="1">
    <location>
        <begin position="749"/>
        <end position="773"/>
    </location>
</feature>
<feature type="repeat" description="LRR 28" evidence="1">
    <location>
        <begin position="818"/>
        <end position="842"/>
    </location>
</feature>
<feature type="repeat" description="LRR 29" evidence="1">
    <location>
        <begin position="843"/>
        <end position="866"/>
    </location>
</feature>
<feature type="repeat" description="LRR 30" evidence="1">
    <location>
        <begin position="867"/>
        <end position="890"/>
    </location>
</feature>
<feature type="repeat" description="LRR 31" evidence="1">
    <location>
        <begin position="892"/>
        <end position="913"/>
    </location>
</feature>
<feature type="region of interest" description="N-cap" evidence="5">
    <location>
        <begin position="25"/>
        <end position="109"/>
    </location>
</feature>
<feature type="region of interest" description="C-cap/acidic domain" evidence="5">
    <location>
        <begin position="914"/>
        <end position="963"/>
    </location>
</feature>
<feature type="glycosylation site" description="N-linked (GlcNAc...) asparagine" evidence="2">
    <location>
        <position position="31"/>
    </location>
</feature>
<feature type="glycosylation site" description="N-linked (GlcNAc...) asparagine" evidence="2">
    <location>
        <position position="145"/>
    </location>
</feature>
<feature type="glycosylation site" description="N-linked (GlcNAc...) asparagine" evidence="2">
    <location>
        <position position="161"/>
    </location>
</feature>
<feature type="glycosylation site" description="N-linked (GlcNAc...) asparagine" evidence="2">
    <location>
        <position position="236"/>
    </location>
</feature>
<feature type="glycosylation site" description="N-linked (GlcNAc...) asparagine" evidence="2">
    <location>
        <position position="263"/>
    </location>
</feature>
<feature type="glycosylation site" description="N-linked (GlcNAc...) asparagine" evidence="2">
    <location>
        <position position="313"/>
    </location>
</feature>
<feature type="glycosylation site" description="N-linked (GlcNAc...) asparagine" evidence="2">
    <location>
        <position position="483"/>
    </location>
</feature>
<feature type="glycosylation site" description="N-linked (GlcNAc...) asparagine" evidence="2">
    <location>
        <position position="534"/>
    </location>
</feature>
<feature type="glycosylation site" description="N-linked (GlcNAc...) asparagine" evidence="2">
    <location>
        <position position="544"/>
    </location>
</feature>
<feature type="glycosylation site" description="N-linked (GlcNAc...) asparagine" evidence="2">
    <location>
        <position position="564"/>
    </location>
</feature>
<feature type="glycosylation site" description="N-linked (GlcNAc...) asparagine" evidence="2">
    <location>
        <position position="593"/>
    </location>
</feature>
<feature type="glycosylation site" description="N-linked (GlcNAc...) asparagine" evidence="2">
    <location>
        <position position="650"/>
    </location>
</feature>
<feature type="glycosylation site" description="N-linked (GlcNAc...) asparagine" evidence="2">
    <location>
        <position position="663"/>
    </location>
</feature>
<feature type="glycosylation site" description="N-linked (GlcNAc...) asparagine" evidence="2">
    <location>
        <position position="770"/>
    </location>
</feature>
<feature type="glycosylation site" description="N-linked (GlcNAc...) asparagine" evidence="2">
    <location>
        <position position="778"/>
    </location>
</feature>
<feature type="glycosylation site" description="N-linked (GlcNAc...) asparagine" evidence="2">
    <location>
        <position position="849"/>
    </location>
</feature>
<feature type="glycosylation site" description="N-linked (GlcNAc...) asparagine" evidence="2">
    <location>
        <position position="856"/>
    </location>
</feature>
<feature type="glycosylation site" description="N-linked (GlcNAc...) asparagine" evidence="2">
    <location>
        <position position="889"/>
    </location>
</feature>
<feature type="mutagenesis site" description="Abolishes hypersensitive response (HR) to EIX elicitor." evidence="3">
    <original>Y</original>
    <variation>A</variation>
    <location>
        <position position="993"/>
    </location>
</feature>
<feature type="sequence conflict" description="In Ref. 1; AAR28378." evidence="4" ref="1">
    <original>D</original>
    <variation>G</variation>
    <location>
        <position position="41"/>
    </location>
</feature>
<feature type="sequence conflict" description="In Ref. 1; AAR28378." evidence="4" ref="1">
    <original>T</original>
    <variation>P</variation>
    <location>
        <position position="363"/>
    </location>
</feature>
<proteinExistence type="evidence at protein level"/>
<protein>
    <recommendedName>
        <fullName evidence="4">Receptor-like protein EIX2</fullName>
    </recommendedName>
    <alternativeName>
        <fullName evidence="6">EIX receptor 2</fullName>
    </alternativeName>
</protein>
<name>EIX2_SOLLC</name>
<gene>
    <name evidence="6" type="primary">EIX2</name>
    <name type="ordered locus">Solyc07g008630.1.1</name>
</gene>
<organism>
    <name type="scientific">Solanum lycopersicum</name>
    <name type="common">Tomato</name>
    <name type="synonym">Lycopersicon esculentum</name>
    <dbReference type="NCBI Taxonomy" id="4081"/>
    <lineage>
        <taxon>Eukaryota</taxon>
        <taxon>Viridiplantae</taxon>
        <taxon>Streptophyta</taxon>
        <taxon>Embryophyta</taxon>
        <taxon>Tracheophyta</taxon>
        <taxon>Spermatophyta</taxon>
        <taxon>Magnoliopsida</taxon>
        <taxon>eudicotyledons</taxon>
        <taxon>Gunneridae</taxon>
        <taxon>Pentapetalae</taxon>
        <taxon>asterids</taxon>
        <taxon>lamiids</taxon>
        <taxon>Solanales</taxon>
        <taxon>Solanaceae</taxon>
        <taxon>Solanoideae</taxon>
        <taxon>Solaneae</taxon>
        <taxon>Solanum</taxon>
        <taxon>Solanum subgen. Lycopersicon</taxon>
    </lineage>
</organism>
<dbReference type="EMBL" id="AY359966">
    <property type="protein sequence ID" value="AAR28378.1"/>
    <property type="molecule type" value="Genomic_DNA"/>
</dbReference>
<dbReference type="EMBL" id="CM001070">
    <property type="status" value="NOT_ANNOTATED_CDS"/>
    <property type="molecule type" value="Genomic_DNA"/>
</dbReference>
<dbReference type="RefSeq" id="XP_004243038.3">
    <property type="nucleotide sequence ID" value="XM_004242990.3"/>
</dbReference>
<dbReference type="SMR" id="Q6JN46"/>
<dbReference type="FunCoup" id="Q6JN46">
    <property type="interactions" value="568"/>
</dbReference>
<dbReference type="STRING" id="4081.Q6JN46"/>
<dbReference type="GlyCosmos" id="Q6JN46">
    <property type="glycosylation" value="18 sites, No reported glycans"/>
</dbReference>
<dbReference type="PaxDb" id="4081-Solyc07g008630.1.1"/>
<dbReference type="EnsemblPlants" id="Solyc07g008630.1.1">
    <property type="protein sequence ID" value="Solyc07g008630.1.1.1"/>
    <property type="gene ID" value="Solyc07g008630.1"/>
</dbReference>
<dbReference type="Gramene" id="Solyc07g008630.1.1">
    <property type="protein sequence ID" value="Solyc07g008630.1.1.1"/>
    <property type="gene ID" value="Solyc07g008630.1"/>
</dbReference>
<dbReference type="eggNOG" id="KOG0619">
    <property type="taxonomic scope" value="Eukaryota"/>
</dbReference>
<dbReference type="InParanoid" id="Q6JN46"/>
<dbReference type="OMA" id="QCQLLQI"/>
<dbReference type="OrthoDB" id="8731593at2759"/>
<dbReference type="Proteomes" id="UP000004994">
    <property type="component" value="Chromosome 7"/>
</dbReference>
<dbReference type="GO" id="GO:0005886">
    <property type="term" value="C:plasma membrane"/>
    <property type="evidence" value="ECO:0007669"/>
    <property type="project" value="UniProtKB-SubCell"/>
</dbReference>
<dbReference type="GO" id="GO:0050832">
    <property type="term" value="P:defense response to fungus"/>
    <property type="evidence" value="ECO:0000314"/>
    <property type="project" value="UniProtKB"/>
</dbReference>
<dbReference type="FunFam" id="3.80.10.10:FF:000920">
    <property type="entry name" value="mRNA, clone: RTFL01-33-G14"/>
    <property type="match status" value="1"/>
</dbReference>
<dbReference type="FunFam" id="3.80.10.10:FF:001488">
    <property type="entry name" value="Receptor-like protein EIX1"/>
    <property type="match status" value="1"/>
</dbReference>
<dbReference type="Gene3D" id="3.80.10.10">
    <property type="entry name" value="Ribonuclease Inhibitor"/>
    <property type="match status" value="4"/>
</dbReference>
<dbReference type="InterPro" id="IPR001611">
    <property type="entry name" value="Leu-rich_rpt"/>
</dbReference>
<dbReference type="InterPro" id="IPR003591">
    <property type="entry name" value="Leu-rich_rpt_typical-subtyp"/>
</dbReference>
<dbReference type="InterPro" id="IPR032675">
    <property type="entry name" value="LRR_dom_sf"/>
</dbReference>
<dbReference type="InterPro" id="IPR013210">
    <property type="entry name" value="LRR_N_plant-typ"/>
</dbReference>
<dbReference type="InterPro" id="IPR046956">
    <property type="entry name" value="RLP23-like"/>
</dbReference>
<dbReference type="PANTHER" id="PTHR48063:SF103">
    <property type="entry name" value="LEUCINE-RICH RECEPTOR-LIKE KINASE FAMILY PROTEIN"/>
    <property type="match status" value="1"/>
</dbReference>
<dbReference type="PANTHER" id="PTHR48063">
    <property type="entry name" value="LRR RECEPTOR-LIKE KINASE"/>
    <property type="match status" value="1"/>
</dbReference>
<dbReference type="Pfam" id="PF00560">
    <property type="entry name" value="LRR_1"/>
    <property type="match status" value="11"/>
</dbReference>
<dbReference type="Pfam" id="PF13855">
    <property type="entry name" value="LRR_8"/>
    <property type="match status" value="3"/>
</dbReference>
<dbReference type="Pfam" id="PF08263">
    <property type="entry name" value="LRRNT_2"/>
    <property type="match status" value="1"/>
</dbReference>
<dbReference type="PRINTS" id="PR00019">
    <property type="entry name" value="LEURICHRPT"/>
</dbReference>
<dbReference type="SMART" id="SM00364">
    <property type="entry name" value="LRR_BAC"/>
    <property type="match status" value="3"/>
</dbReference>
<dbReference type="SMART" id="SM00365">
    <property type="entry name" value="LRR_SD22"/>
    <property type="match status" value="8"/>
</dbReference>
<dbReference type="SMART" id="SM00369">
    <property type="entry name" value="LRR_TYP"/>
    <property type="match status" value="10"/>
</dbReference>
<dbReference type="SUPFAM" id="SSF52058">
    <property type="entry name" value="L domain-like"/>
    <property type="match status" value="2"/>
</dbReference>
<dbReference type="SUPFAM" id="SSF52047">
    <property type="entry name" value="RNI-like"/>
    <property type="match status" value="1"/>
</dbReference>
<dbReference type="PROSITE" id="PS51450">
    <property type="entry name" value="LRR"/>
    <property type="match status" value="19"/>
</dbReference>
<reference key="1">
    <citation type="journal article" date="2004" name="Plant Cell">
        <title>The receptor for the fungal elicitor ethylene-inducing xylanase is a member of a resistance-like gene family in tomato.</title>
        <authorList>
            <person name="Ron M."/>
            <person name="Avni A."/>
        </authorList>
    </citation>
    <scope>NUCLEOTIDE SEQUENCE [GENOMIC DNA]</scope>
    <scope>FUNCTION</scope>
    <scope>INTERACTION WITH EIX ELICITOR</scope>
    <scope>MUTAGENESIS OF TYR-993</scope>
    <source>
        <strain>cv. Rio Grande</strain>
    </source>
</reference>
<reference key="2">
    <citation type="journal article" date="2012" name="Nature">
        <title>The tomato genome sequence provides insights into fleshy fruit evolution.</title>
        <authorList>
            <consortium name="Tomato Genome Consortium"/>
        </authorList>
    </citation>
    <scope>NUCLEOTIDE SEQUENCE [LARGE SCALE GENOMIC DNA]</scope>
    <source>
        <strain>cv. Heinz 1706</strain>
    </source>
</reference>